<comment type="catalytic activity">
    <reaction evidence="1">
        <text>sn-glycerol 3-phosphate + an acyl-CoA = a 1-acyl-sn-glycero-3-phosphate + CoA</text>
        <dbReference type="Rhea" id="RHEA:15325"/>
        <dbReference type="ChEBI" id="CHEBI:57287"/>
        <dbReference type="ChEBI" id="CHEBI:57597"/>
        <dbReference type="ChEBI" id="CHEBI:57970"/>
        <dbReference type="ChEBI" id="CHEBI:58342"/>
        <dbReference type="EC" id="2.3.1.15"/>
    </reaction>
</comment>
<comment type="pathway">
    <text evidence="1">Phospholipid metabolism; CDP-diacylglycerol biosynthesis; CDP-diacylglycerol from sn-glycerol 3-phosphate: step 1/3.</text>
</comment>
<comment type="subcellular location">
    <subcellularLocation>
        <location evidence="1">Cell inner membrane</location>
        <topology evidence="1">Peripheral membrane protein</topology>
        <orientation evidence="1">Cytoplasmic side</orientation>
    </subcellularLocation>
</comment>
<comment type="domain">
    <text evidence="1">The HXXXXD motif is essential for acyltransferase activity and may constitute the binding site for the phosphate moiety of the glycerol-3-phosphate.</text>
</comment>
<comment type="similarity">
    <text evidence="1">Belongs to the GPAT/DAPAT family.</text>
</comment>
<feature type="chain" id="PRO_0000195230" description="Glycerol-3-phosphate acyltransferase">
    <location>
        <begin position="1"/>
        <end position="833"/>
    </location>
</feature>
<feature type="short sequence motif" description="HXXXXD motif">
    <location>
        <begin position="310"/>
        <end position="315"/>
    </location>
</feature>
<dbReference type="EC" id="2.3.1.15" evidence="1"/>
<dbReference type="EMBL" id="AE016853">
    <property type="protein sequence ID" value="AAO55040.1"/>
    <property type="molecule type" value="Genomic_DNA"/>
</dbReference>
<dbReference type="RefSeq" id="NP_791345.1">
    <property type="nucleotide sequence ID" value="NC_004578.1"/>
</dbReference>
<dbReference type="RefSeq" id="WP_007245401.1">
    <property type="nucleotide sequence ID" value="NC_004578.1"/>
</dbReference>
<dbReference type="SMR" id="Q886Q7"/>
<dbReference type="STRING" id="223283.PSPTO_1520"/>
<dbReference type="GeneID" id="1183157"/>
<dbReference type="KEGG" id="pst:PSPTO_1520"/>
<dbReference type="PATRIC" id="fig|223283.9.peg.1543"/>
<dbReference type="eggNOG" id="COG2937">
    <property type="taxonomic scope" value="Bacteria"/>
</dbReference>
<dbReference type="HOGENOM" id="CLU_015407_0_0_6"/>
<dbReference type="OrthoDB" id="335193at2"/>
<dbReference type="PhylomeDB" id="Q886Q7"/>
<dbReference type="UniPathway" id="UPA00557">
    <property type="reaction ID" value="UER00612"/>
</dbReference>
<dbReference type="Proteomes" id="UP000002515">
    <property type="component" value="Chromosome"/>
</dbReference>
<dbReference type="GO" id="GO:0005886">
    <property type="term" value="C:plasma membrane"/>
    <property type="evidence" value="ECO:0007669"/>
    <property type="project" value="UniProtKB-SubCell"/>
</dbReference>
<dbReference type="GO" id="GO:0004366">
    <property type="term" value="F:glycerol-3-phosphate O-acyltransferase activity"/>
    <property type="evidence" value="ECO:0007669"/>
    <property type="project" value="UniProtKB-UniRule"/>
</dbReference>
<dbReference type="GO" id="GO:0016024">
    <property type="term" value="P:CDP-diacylglycerol biosynthetic process"/>
    <property type="evidence" value="ECO:0007669"/>
    <property type="project" value="UniProtKB-UniRule"/>
</dbReference>
<dbReference type="GO" id="GO:0006631">
    <property type="term" value="P:fatty acid metabolic process"/>
    <property type="evidence" value="ECO:0007669"/>
    <property type="project" value="TreeGrafter"/>
</dbReference>
<dbReference type="CDD" id="cd07993">
    <property type="entry name" value="LPLAT_DHAPAT-like"/>
    <property type="match status" value="1"/>
</dbReference>
<dbReference type="HAMAP" id="MF_00393">
    <property type="entry name" value="Glyc3P_acyltrans"/>
    <property type="match status" value="1"/>
</dbReference>
<dbReference type="InterPro" id="IPR022284">
    <property type="entry name" value="GPAT/DHAPAT"/>
</dbReference>
<dbReference type="InterPro" id="IPR045520">
    <property type="entry name" value="GPAT/DHAPAT_C"/>
</dbReference>
<dbReference type="InterPro" id="IPR041728">
    <property type="entry name" value="GPAT/DHAPAT_LPLAT"/>
</dbReference>
<dbReference type="InterPro" id="IPR028354">
    <property type="entry name" value="GPAT_PlsB"/>
</dbReference>
<dbReference type="InterPro" id="IPR002123">
    <property type="entry name" value="Plipid/glycerol_acylTrfase"/>
</dbReference>
<dbReference type="NCBIfam" id="TIGR03703">
    <property type="entry name" value="plsB"/>
    <property type="match status" value="1"/>
</dbReference>
<dbReference type="NCBIfam" id="NF003441">
    <property type="entry name" value="PRK04974.1"/>
    <property type="match status" value="1"/>
</dbReference>
<dbReference type="PANTHER" id="PTHR12563:SF17">
    <property type="entry name" value="DIHYDROXYACETONE PHOSPHATE ACYLTRANSFERASE"/>
    <property type="match status" value="1"/>
</dbReference>
<dbReference type="PANTHER" id="PTHR12563">
    <property type="entry name" value="GLYCEROL-3-PHOSPHATE ACYLTRANSFERASE"/>
    <property type="match status" value="1"/>
</dbReference>
<dbReference type="Pfam" id="PF01553">
    <property type="entry name" value="Acyltransferase"/>
    <property type="match status" value="1"/>
</dbReference>
<dbReference type="Pfam" id="PF19277">
    <property type="entry name" value="GPAT_C"/>
    <property type="match status" value="1"/>
</dbReference>
<dbReference type="PIRSF" id="PIRSF500064">
    <property type="entry name" value="GPAT"/>
    <property type="match status" value="1"/>
</dbReference>
<dbReference type="PIRSF" id="PIRSF000437">
    <property type="entry name" value="GPAT_DHAPAT"/>
    <property type="match status" value="1"/>
</dbReference>
<dbReference type="SMART" id="SM00563">
    <property type="entry name" value="PlsC"/>
    <property type="match status" value="1"/>
</dbReference>
<dbReference type="SUPFAM" id="SSF69593">
    <property type="entry name" value="Glycerol-3-phosphate (1)-acyltransferase"/>
    <property type="match status" value="1"/>
</dbReference>
<evidence type="ECO:0000255" key="1">
    <source>
        <dbReference type="HAMAP-Rule" id="MF_00393"/>
    </source>
</evidence>
<gene>
    <name evidence="1" type="primary">plsB</name>
    <name type="ordered locus">PSPTO_1520</name>
</gene>
<name>PLSB_PSESM</name>
<proteinExistence type="inferred from homology"/>
<keyword id="KW-0012">Acyltransferase</keyword>
<keyword id="KW-0997">Cell inner membrane</keyword>
<keyword id="KW-1003">Cell membrane</keyword>
<keyword id="KW-0444">Lipid biosynthesis</keyword>
<keyword id="KW-0443">Lipid metabolism</keyword>
<keyword id="KW-0472">Membrane</keyword>
<keyword id="KW-0594">Phospholipid biosynthesis</keyword>
<keyword id="KW-1208">Phospholipid metabolism</keyword>
<keyword id="KW-1185">Reference proteome</keyword>
<keyword id="KW-0808">Transferase</keyword>
<sequence>MTRSPFRRLVFGTLRRLLYLWVRSETINQSSFTLNLDRSRPVFYALQSPSISDLAVIDTECRKAGLPRPVLSVAVGNLIEPSAYFYLTPAPDWLGRQDKRGAPPTLERLVAAVSQNPGEDAQIIPVSVFWGQSPDHESSAWKLLFADSWAVTGRLRRLVSILILGRKTRVQFSAPIHMRELVDQNKGHELTLRMSQRLLRTHFRNLKSAVIGPDVSHRRTVVKGLLDEPLVKQAIIEEAERENITQEKARERALSYGNEIASDYTYSVIRFMEVVLSWFWNKIYDGIKVSHIEGVQEIAPGHEVIYVPCHRSHIDYLLLSYLLFRNGLTPPHIAAGINLNMPVVGSLLRRGGAFFMRRTFKGSPLYTAVFTEYLHTLFTKGFPVEYFVEGGRSRTGRMLQPKTGMLAITLRSFLRNSRMPIVFIPVYIGYERVLEGRTYLGELRGATKKKESIFDIFKVIGALKQRFGQVSVNFGEPIRLAEFLDGEQPDWREQELAPQFRPDWLSETTHRLGERVAQHLNEAAAVNPMNLVAITLLSTQKLALDDQAMERVLDLYLTLLRAVPYSPHTTLPEGNGRSLIEHVKGMDLLAEQKDALGKILYLNEQNAVLMTYYRNNVLHIFALPSLLASFFQSSSRMSREQILRYTHALYPYLQSELFIRWPLSELDEVVDQWLAAFVEQGLLRFRNDAYVRPEPSSREFVLLTLLSRAIAQTLQRFYMAIALLLNSGPNTLNPEELEDLCTVMAQRLSILHGLNAPEFFDKSLFRHFIQTLLDLRVLRKDRAGKLSYHPMLGELAEGAAKRVLPAEIRLSIRQVALHSNEEEQNAGNESGAA</sequence>
<accession>Q886Q7</accession>
<reference key="1">
    <citation type="journal article" date="2003" name="Proc. Natl. Acad. Sci. U.S.A.">
        <title>The complete genome sequence of the Arabidopsis and tomato pathogen Pseudomonas syringae pv. tomato DC3000.</title>
        <authorList>
            <person name="Buell C.R."/>
            <person name="Joardar V."/>
            <person name="Lindeberg M."/>
            <person name="Selengut J."/>
            <person name="Paulsen I.T."/>
            <person name="Gwinn M.L."/>
            <person name="Dodson R.J."/>
            <person name="DeBoy R.T."/>
            <person name="Durkin A.S."/>
            <person name="Kolonay J.F."/>
            <person name="Madupu R."/>
            <person name="Daugherty S.C."/>
            <person name="Brinkac L.M."/>
            <person name="Beanan M.J."/>
            <person name="Haft D.H."/>
            <person name="Nelson W.C."/>
            <person name="Davidsen T.M."/>
            <person name="Zafar N."/>
            <person name="Zhou L."/>
            <person name="Liu J."/>
            <person name="Yuan Q."/>
            <person name="Khouri H.M."/>
            <person name="Fedorova N.B."/>
            <person name="Tran B."/>
            <person name="Russell D."/>
            <person name="Berry K.J."/>
            <person name="Utterback T.R."/>
            <person name="Van Aken S.E."/>
            <person name="Feldblyum T.V."/>
            <person name="D'Ascenzo M."/>
            <person name="Deng W.-L."/>
            <person name="Ramos A.R."/>
            <person name="Alfano J.R."/>
            <person name="Cartinhour S."/>
            <person name="Chatterjee A.K."/>
            <person name="Delaney T.P."/>
            <person name="Lazarowitz S.G."/>
            <person name="Martin G.B."/>
            <person name="Schneider D.J."/>
            <person name="Tang X."/>
            <person name="Bender C.L."/>
            <person name="White O."/>
            <person name="Fraser C.M."/>
            <person name="Collmer A."/>
        </authorList>
    </citation>
    <scope>NUCLEOTIDE SEQUENCE [LARGE SCALE GENOMIC DNA]</scope>
    <source>
        <strain>ATCC BAA-871 / DC3000</strain>
    </source>
</reference>
<protein>
    <recommendedName>
        <fullName evidence="1">Glycerol-3-phosphate acyltransferase</fullName>
        <shortName evidence="1">GPAT</shortName>
        <ecNumber evidence="1">2.3.1.15</ecNumber>
    </recommendedName>
</protein>
<organism>
    <name type="scientific">Pseudomonas syringae pv. tomato (strain ATCC BAA-871 / DC3000)</name>
    <dbReference type="NCBI Taxonomy" id="223283"/>
    <lineage>
        <taxon>Bacteria</taxon>
        <taxon>Pseudomonadati</taxon>
        <taxon>Pseudomonadota</taxon>
        <taxon>Gammaproteobacteria</taxon>
        <taxon>Pseudomonadales</taxon>
        <taxon>Pseudomonadaceae</taxon>
        <taxon>Pseudomonas</taxon>
    </lineage>
</organism>